<protein>
    <recommendedName>
        <fullName evidence="1">Glycogen synthase</fullName>
        <ecNumber evidence="1">2.4.1.21</ecNumber>
    </recommendedName>
    <alternativeName>
        <fullName evidence="1">Starch [bacterial glycogen] synthase</fullName>
    </alternativeName>
</protein>
<accession>A7GU98</accession>
<gene>
    <name evidence="1" type="primary">glgA</name>
    <name type="ordered locus">Bcer98_3501</name>
</gene>
<comment type="function">
    <text evidence="1">Synthesizes alpha-1,4-glucan chains using ADP-glucose.</text>
</comment>
<comment type="catalytic activity">
    <reaction evidence="1">
        <text>[(1-&gt;4)-alpha-D-glucosyl](n) + ADP-alpha-D-glucose = [(1-&gt;4)-alpha-D-glucosyl](n+1) + ADP + H(+)</text>
        <dbReference type="Rhea" id="RHEA:18189"/>
        <dbReference type="Rhea" id="RHEA-COMP:9584"/>
        <dbReference type="Rhea" id="RHEA-COMP:9587"/>
        <dbReference type="ChEBI" id="CHEBI:15378"/>
        <dbReference type="ChEBI" id="CHEBI:15444"/>
        <dbReference type="ChEBI" id="CHEBI:57498"/>
        <dbReference type="ChEBI" id="CHEBI:456216"/>
        <dbReference type="EC" id="2.4.1.21"/>
    </reaction>
</comment>
<comment type="pathway">
    <text evidence="1">Glycan biosynthesis; glycogen biosynthesis.</text>
</comment>
<comment type="similarity">
    <text evidence="1">Belongs to the glycosyltransferase 1 family. Bacterial/plant glycogen synthase subfamily.</text>
</comment>
<dbReference type="EC" id="2.4.1.21" evidence="1"/>
<dbReference type="EMBL" id="CP000764">
    <property type="protein sequence ID" value="ABS23706.1"/>
    <property type="molecule type" value="Genomic_DNA"/>
</dbReference>
<dbReference type="RefSeq" id="WP_012095957.1">
    <property type="nucleotide sequence ID" value="NC_009674.1"/>
</dbReference>
<dbReference type="SMR" id="A7GU98"/>
<dbReference type="STRING" id="315749.Bcer98_3501"/>
<dbReference type="CAZy" id="GT5">
    <property type="family name" value="Glycosyltransferase Family 5"/>
</dbReference>
<dbReference type="GeneID" id="33898732"/>
<dbReference type="KEGG" id="bcy:Bcer98_3501"/>
<dbReference type="eggNOG" id="COG0297">
    <property type="taxonomic scope" value="Bacteria"/>
</dbReference>
<dbReference type="HOGENOM" id="CLU_009583_18_2_9"/>
<dbReference type="OrthoDB" id="9808590at2"/>
<dbReference type="UniPathway" id="UPA00164"/>
<dbReference type="Proteomes" id="UP000002300">
    <property type="component" value="Chromosome"/>
</dbReference>
<dbReference type="GO" id="GO:0009011">
    <property type="term" value="F:alpha-1,4-glucan glucosyltransferase (ADP-glucose donor) activity"/>
    <property type="evidence" value="ECO:0007669"/>
    <property type="project" value="UniProtKB-UniRule"/>
</dbReference>
<dbReference type="GO" id="GO:0004373">
    <property type="term" value="F:alpha-1,4-glucan glucosyltransferase (UDP-glucose donor) activity"/>
    <property type="evidence" value="ECO:0007669"/>
    <property type="project" value="InterPro"/>
</dbReference>
<dbReference type="GO" id="GO:0005978">
    <property type="term" value="P:glycogen biosynthetic process"/>
    <property type="evidence" value="ECO:0007669"/>
    <property type="project" value="UniProtKB-UniRule"/>
</dbReference>
<dbReference type="CDD" id="cd03791">
    <property type="entry name" value="GT5_Glycogen_synthase_DULL1-like"/>
    <property type="match status" value="1"/>
</dbReference>
<dbReference type="Gene3D" id="3.40.50.2000">
    <property type="entry name" value="Glycogen Phosphorylase B"/>
    <property type="match status" value="2"/>
</dbReference>
<dbReference type="HAMAP" id="MF_00484">
    <property type="entry name" value="Glycogen_synth"/>
    <property type="match status" value="1"/>
</dbReference>
<dbReference type="InterPro" id="IPR001296">
    <property type="entry name" value="Glyco_trans_1"/>
</dbReference>
<dbReference type="InterPro" id="IPR011835">
    <property type="entry name" value="GS/SS"/>
</dbReference>
<dbReference type="InterPro" id="IPR013534">
    <property type="entry name" value="Starch_synth_cat_dom"/>
</dbReference>
<dbReference type="NCBIfam" id="TIGR02095">
    <property type="entry name" value="glgA"/>
    <property type="match status" value="1"/>
</dbReference>
<dbReference type="NCBIfam" id="NF001898">
    <property type="entry name" value="PRK00654.1-1"/>
    <property type="match status" value="1"/>
</dbReference>
<dbReference type="NCBIfam" id="NF001899">
    <property type="entry name" value="PRK00654.1-2"/>
    <property type="match status" value="1"/>
</dbReference>
<dbReference type="PANTHER" id="PTHR45825:SF11">
    <property type="entry name" value="ALPHA AMYLASE DOMAIN-CONTAINING PROTEIN"/>
    <property type="match status" value="1"/>
</dbReference>
<dbReference type="PANTHER" id="PTHR45825">
    <property type="entry name" value="GRANULE-BOUND STARCH SYNTHASE 1, CHLOROPLASTIC/AMYLOPLASTIC"/>
    <property type="match status" value="1"/>
</dbReference>
<dbReference type="Pfam" id="PF08323">
    <property type="entry name" value="Glyco_transf_5"/>
    <property type="match status" value="1"/>
</dbReference>
<dbReference type="Pfam" id="PF00534">
    <property type="entry name" value="Glycos_transf_1"/>
    <property type="match status" value="1"/>
</dbReference>
<dbReference type="SUPFAM" id="SSF53756">
    <property type="entry name" value="UDP-Glycosyltransferase/glycogen phosphorylase"/>
    <property type="match status" value="1"/>
</dbReference>
<proteinExistence type="inferred from homology"/>
<name>GLGA_BACCN</name>
<sequence length="478" mass="55296">MNILFAVSECVPFIKSGGLADVAGALPKELKKLGVNVRIMLPNYSLIPANLRESFKLHKVIHVPLGWRNQYCGILKGEQDGITYYLIDNEYYFKRDSLYGHYDDGERFSFFSKAILESIPYLDFEVDLIHSHDWHTAMVNFLLHEKYKDNPLYEKIKTVYTIHNLQFQGVFPREVIHDLLELGDEYFNSEQLEFYGNINFMKGGIIAADHITTVSSTYKEEIQYEFFGEKLDGLLRKYNDKLSGIVNGIDTSVYNPRLDSYITATYDVDTLYAKRENKWALQHYFGLPEKENTPIISMVTRLTKQKGLDLVRAVFQEIMQEDVQCIILGSGDSEYEQFFEWMAYEYSEKVKVYIGFNEELAHQVYAGSDLFLMPSLFEPCGLGQLIALTYGVIPIVRETGGLNDTVKSYHVETKSGNGFTFTNFNAHDMLYTVRRALRYYEDPAVWNQLVKQAMTEDHSWKTSALAYKDLYNRLLKLS</sequence>
<reference key="1">
    <citation type="journal article" date="2008" name="Chem. Biol. Interact.">
        <title>Extending the Bacillus cereus group genomics to putative food-borne pathogens of different toxicity.</title>
        <authorList>
            <person name="Lapidus A."/>
            <person name="Goltsman E."/>
            <person name="Auger S."/>
            <person name="Galleron N."/>
            <person name="Segurens B."/>
            <person name="Dossat C."/>
            <person name="Land M.L."/>
            <person name="Broussolle V."/>
            <person name="Brillard J."/>
            <person name="Guinebretiere M.-H."/>
            <person name="Sanchis V."/>
            <person name="Nguen-the C."/>
            <person name="Lereclus D."/>
            <person name="Richardson P."/>
            <person name="Wincker P."/>
            <person name="Weissenbach J."/>
            <person name="Ehrlich S.D."/>
            <person name="Sorokin A."/>
        </authorList>
    </citation>
    <scope>NUCLEOTIDE SEQUENCE [LARGE SCALE GENOMIC DNA]</scope>
    <source>
        <strain>DSM 22905 / CIP 110041 / 391-98 / NVH 391-98</strain>
    </source>
</reference>
<keyword id="KW-0320">Glycogen biosynthesis</keyword>
<keyword id="KW-0328">Glycosyltransferase</keyword>
<keyword id="KW-0808">Transferase</keyword>
<organism>
    <name type="scientific">Bacillus cytotoxicus (strain DSM 22905 / CIP 110041 / 391-98 / NVH 391-98)</name>
    <dbReference type="NCBI Taxonomy" id="315749"/>
    <lineage>
        <taxon>Bacteria</taxon>
        <taxon>Bacillati</taxon>
        <taxon>Bacillota</taxon>
        <taxon>Bacilli</taxon>
        <taxon>Bacillales</taxon>
        <taxon>Bacillaceae</taxon>
        <taxon>Bacillus</taxon>
        <taxon>Bacillus cereus group</taxon>
    </lineage>
</organism>
<evidence type="ECO:0000255" key="1">
    <source>
        <dbReference type="HAMAP-Rule" id="MF_00484"/>
    </source>
</evidence>
<feature type="chain" id="PRO_1000081319" description="Glycogen synthase">
    <location>
        <begin position="1"/>
        <end position="478"/>
    </location>
</feature>
<feature type="binding site" evidence="1">
    <location>
        <position position="15"/>
    </location>
    <ligand>
        <name>ADP-alpha-D-glucose</name>
        <dbReference type="ChEBI" id="CHEBI:57498"/>
    </ligand>
</feature>